<accession>Q9UBB6</accession>
<accession>D3DPR9</accession>
<accession>Q9UBY2</accession>
<accession>Q9Y4A6</accession>
<accession>Q9Y4D9</accession>
<dbReference type="EMBL" id="AB018739">
    <property type="protein sequence ID" value="BAA85384.2"/>
    <property type="molecule type" value="mRNA"/>
</dbReference>
<dbReference type="EMBL" id="AB018740">
    <property type="protein sequence ID" value="BAA85385.2"/>
    <property type="molecule type" value="mRNA"/>
</dbReference>
<dbReference type="EMBL" id="AB027514">
    <property type="protein sequence ID" value="BAA77830.1"/>
    <property type="molecule type" value="Genomic_DNA"/>
</dbReference>
<dbReference type="EMBL" id="AB027514">
    <property type="protein sequence ID" value="BAA77831.1"/>
    <property type="molecule type" value="Genomic_DNA"/>
</dbReference>
<dbReference type="EMBL" id="AB011179">
    <property type="protein sequence ID" value="BAA25533.1"/>
    <property type="status" value="ALT_INIT"/>
    <property type="molecule type" value="mRNA"/>
</dbReference>
<dbReference type="EMBL" id="AC004865">
    <property type="protein sequence ID" value="AAD05029.1"/>
    <property type="status" value="ALT_SEQ"/>
    <property type="molecule type" value="Genomic_DNA"/>
</dbReference>
<dbReference type="EMBL" id="CH471059">
    <property type="protein sequence ID" value="EAX07410.1"/>
    <property type="molecule type" value="Genomic_DNA"/>
</dbReference>
<dbReference type="EMBL" id="CH471059">
    <property type="protein sequence ID" value="EAX07411.1"/>
    <property type="molecule type" value="Genomic_DNA"/>
</dbReference>
<dbReference type="EMBL" id="CH471059">
    <property type="protein sequence ID" value="EAX07412.1"/>
    <property type="molecule type" value="Genomic_DNA"/>
</dbReference>
<dbReference type="EMBL" id="BC024592">
    <property type="protein sequence ID" value="AAH24592.1"/>
    <property type="molecule type" value="mRNA"/>
</dbReference>
<dbReference type="CCDS" id="CCDS30672.1">
    <molecule id="Q9UBB6-2"/>
</dbReference>
<dbReference type="CCDS" id="CCDS392.1">
    <molecule id="Q9UBB6-1"/>
</dbReference>
<dbReference type="RefSeq" id="NP_001014839.1">
    <molecule id="Q9UBB6-1"/>
    <property type="nucleotide sequence ID" value="NM_001014839.2"/>
</dbReference>
<dbReference type="RefSeq" id="NP_001014841.1">
    <molecule id="Q9UBB6-2"/>
    <property type="nucleotide sequence ID" value="NM_001014841.2"/>
</dbReference>
<dbReference type="RefSeq" id="NP_055099.1">
    <molecule id="Q9UBB6-1"/>
    <property type="nucleotide sequence ID" value="NM_014284.3"/>
</dbReference>
<dbReference type="SMR" id="Q9UBB6"/>
<dbReference type="BioGRID" id="116768">
    <property type="interactions" value="121"/>
</dbReference>
<dbReference type="FunCoup" id="Q9UBB6">
    <property type="interactions" value="406"/>
</dbReference>
<dbReference type="IntAct" id="Q9UBB6">
    <property type="interactions" value="55"/>
</dbReference>
<dbReference type="STRING" id="9606.ENSP00000362340"/>
<dbReference type="GlyGen" id="Q9UBB6">
    <property type="glycosylation" value="4 sites, 1 O-linked glycan (1 site)"/>
</dbReference>
<dbReference type="iPTMnet" id="Q9UBB6"/>
<dbReference type="PhosphoSitePlus" id="Q9UBB6"/>
<dbReference type="SwissPalm" id="Q9UBB6"/>
<dbReference type="BioMuta" id="NCDN"/>
<dbReference type="jPOST" id="Q9UBB6"/>
<dbReference type="MassIVE" id="Q9UBB6"/>
<dbReference type="PaxDb" id="9606-ENSP00000362340"/>
<dbReference type="PeptideAtlas" id="Q9UBB6"/>
<dbReference type="ProteomicsDB" id="83925">
    <molecule id="Q9UBB6-1"/>
</dbReference>
<dbReference type="ProteomicsDB" id="83926">
    <molecule id="Q9UBB6-2"/>
</dbReference>
<dbReference type="Pumba" id="Q9UBB6"/>
<dbReference type="Antibodypedia" id="17311">
    <property type="antibodies" value="205 antibodies from 28 providers"/>
</dbReference>
<dbReference type="DNASU" id="23154"/>
<dbReference type="Ensembl" id="ENST00000356090.8">
    <molecule id="Q9UBB6-1"/>
    <property type="protein sequence ID" value="ENSP00000348394.4"/>
    <property type="gene ID" value="ENSG00000020129.16"/>
</dbReference>
<dbReference type="Ensembl" id="ENST00000373243.7">
    <molecule id="Q9UBB6-1"/>
    <property type="protein sequence ID" value="ENSP00000362340.2"/>
    <property type="gene ID" value="ENSG00000020129.16"/>
</dbReference>
<dbReference type="Ensembl" id="ENST00000373253.7">
    <molecule id="Q9UBB6-2"/>
    <property type="protein sequence ID" value="ENSP00000362350.3"/>
    <property type="gene ID" value="ENSG00000020129.16"/>
</dbReference>
<dbReference type="GeneID" id="23154"/>
<dbReference type="KEGG" id="hsa:23154"/>
<dbReference type="MANE-Select" id="ENST00000373243.7">
    <property type="protein sequence ID" value="ENSP00000362340.2"/>
    <property type="RefSeq nucleotide sequence ID" value="NM_014284.3"/>
    <property type="RefSeq protein sequence ID" value="NP_055099.1"/>
</dbReference>
<dbReference type="UCSC" id="uc001bza.3">
    <molecule id="Q9UBB6-1"/>
    <property type="organism name" value="human"/>
</dbReference>
<dbReference type="AGR" id="HGNC:17597"/>
<dbReference type="CTD" id="23154"/>
<dbReference type="DisGeNET" id="23154"/>
<dbReference type="GeneCards" id="NCDN"/>
<dbReference type="HGNC" id="HGNC:17597">
    <property type="gene designation" value="NCDN"/>
</dbReference>
<dbReference type="HPA" id="ENSG00000020129">
    <property type="expression patterns" value="Tissue enriched (brain)"/>
</dbReference>
<dbReference type="MalaCards" id="NCDN"/>
<dbReference type="MIM" id="608458">
    <property type="type" value="gene"/>
</dbReference>
<dbReference type="MIM" id="619373">
    <property type="type" value="phenotype"/>
</dbReference>
<dbReference type="neXtProt" id="NX_Q9UBB6"/>
<dbReference type="OpenTargets" id="ENSG00000020129"/>
<dbReference type="Orphanet" id="88616">
    <property type="disease" value="Autosomal recessive non-syndromic intellectual disability"/>
</dbReference>
<dbReference type="PharmGKB" id="PA134963729"/>
<dbReference type="VEuPathDB" id="HostDB:ENSG00000020129"/>
<dbReference type="eggNOG" id="KOG2611">
    <property type="taxonomic scope" value="Eukaryota"/>
</dbReference>
<dbReference type="GeneTree" id="ENSGT00390000013601"/>
<dbReference type="HOGENOM" id="CLU_012443_0_0_1"/>
<dbReference type="InParanoid" id="Q9UBB6"/>
<dbReference type="OMA" id="IVHYKKP"/>
<dbReference type="OrthoDB" id="8186546at2759"/>
<dbReference type="PAN-GO" id="Q9UBB6">
    <property type="GO annotations" value="3 GO annotations based on evolutionary models"/>
</dbReference>
<dbReference type="PhylomeDB" id="Q9UBB6"/>
<dbReference type="TreeFam" id="TF323752"/>
<dbReference type="PathwayCommons" id="Q9UBB6"/>
<dbReference type="SignaLink" id="Q9UBB6"/>
<dbReference type="BioGRID-ORCS" id="23154">
    <property type="hits" value="31 hits in 1167 CRISPR screens"/>
</dbReference>
<dbReference type="CD-CODE" id="FB4E32DD">
    <property type="entry name" value="Presynaptic clusters and postsynaptic densities"/>
</dbReference>
<dbReference type="ChiTaRS" id="NCDN">
    <property type="organism name" value="human"/>
</dbReference>
<dbReference type="GeneWiki" id="NCDN"/>
<dbReference type="GenomeRNAi" id="23154"/>
<dbReference type="Pharos" id="Q9UBB6">
    <property type="development level" value="Tbio"/>
</dbReference>
<dbReference type="PRO" id="PR:Q9UBB6"/>
<dbReference type="Proteomes" id="UP000005640">
    <property type="component" value="Chromosome 1"/>
</dbReference>
<dbReference type="RNAct" id="Q9UBB6">
    <property type="molecule type" value="protein"/>
</dbReference>
<dbReference type="Bgee" id="ENSG00000020129">
    <property type="expression patterns" value="Expressed in middle frontal gyrus and 133 other cell types or tissues"/>
</dbReference>
<dbReference type="ExpressionAtlas" id="Q9UBB6">
    <property type="expression patterns" value="baseline and differential"/>
</dbReference>
<dbReference type="GO" id="GO:0005829">
    <property type="term" value="C:cytosol"/>
    <property type="evidence" value="ECO:0000314"/>
    <property type="project" value="HPA"/>
</dbReference>
<dbReference type="GO" id="GO:0030425">
    <property type="term" value="C:dendrite"/>
    <property type="evidence" value="ECO:0000250"/>
    <property type="project" value="UniProtKB"/>
</dbReference>
<dbReference type="GO" id="GO:0010008">
    <property type="term" value="C:endosome membrane"/>
    <property type="evidence" value="ECO:0007669"/>
    <property type="project" value="UniProtKB-SubCell"/>
</dbReference>
<dbReference type="GO" id="GO:0098978">
    <property type="term" value="C:glutamatergic synapse"/>
    <property type="evidence" value="ECO:0007669"/>
    <property type="project" value="Ensembl"/>
</dbReference>
<dbReference type="GO" id="GO:0016020">
    <property type="term" value="C:membrane"/>
    <property type="evidence" value="ECO:0000314"/>
    <property type="project" value="UniProtKB"/>
</dbReference>
<dbReference type="GO" id="GO:0043025">
    <property type="term" value="C:neuronal cell body"/>
    <property type="evidence" value="ECO:0000250"/>
    <property type="project" value="UniProtKB"/>
</dbReference>
<dbReference type="GO" id="GO:0043204">
    <property type="term" value="C:perikaryon"/>
    <property type="evidence" value="ECO:0007669"/>
    <property type="project" value="Ensembl"/>
</dbReference>
<dbReference type="GO" id="GO:0098794">
    <property type="term" value="C:postsynapse"/>
    <property type="evidence" value="ECO:0007669"/>
    <property type="project" value="UniProtKB-SubCell"/>
</dbReference>
<dbReference type="GO" id="GO:0045453">
    <property type="term" value="P:bone resorption"/>
    <property type="evidence" value="ECO:0007669"/>
    <property type="project" value="Ensembl"/>
</dbReference>
<dbReference type="GO" id="GO:0031175">
    <property type="term" value="P:neuron projection development"/>
    <property type="evidence" value="ECO:0000250"/>
    <property type="project" value="UniProtKB"/>
</dbReference>
<dbReference type="GO" id="GO:0048168">
    <property type="term" value="P:regulation of neuronal synaptic plasticity"/>
    <property type="evidence" value="ECO:0000318"/>
    <property type="project" value="GO_Central"/>
</dbReference>
<dbReference type="GO" id="GO:0099149">
    <property type="term" value="P:regulation of postsynaptic neurotransmitter receptor internalization"/>
    <property type="evidence" value="ECO:0007669"/>
    <property type="project" value="Ensembl"/>
</dbReference>
<dbReference type="InterPro" id="IPR016024">
    <property type="entry name" value="ARM-type_fold"/>
</dbReference>
<dbReference type="InterPro" id="IPR008709">
    <property type="entry name" value="Neurochondrin"/>
</dbReference>
<dbReference type="PANTHER" id="PTHR13109">
    <property type="entry name" value="NEUROCHONDRIN"/>
    <property type="match status" value="1"/>
</dbReference>
<dbReference type="PANTHER" id="PTHR13109:SF7">
    <property type="entry name" value="NEUROCHONDRIN"/>
    <property type="match status" value="1"/>
</dbReference>
<dbReference type="Pfam" id="PF05536">
    <property type="entry name" value="Neurochondrin"/>
    <property type="match status" value="1"/>
</dbReference>
<dbReference type="SUPFAM" id="SSF48371">
    <property type="entry name" value="ARM repeat"/>
    <property type="match status" value="1"/>
</dbReference>
<evidence type="ECO:0000250" key="1">
    <source>
        <dbReference type="UniProtKB" id="O35095"/>
    </source>
</evidence>
<evidence type="ECO:0000250" key="2">
    <source>
        <dbReference type="UniProtKB" id="Q9Z0E0"/>
    </source>
</evidence>
<evidence type="ECO:0000269" key="3">
    <source>
    </source>
</evidence>
<evidence type="ECO:0000269" key="4">
    <source>
    </source>
</evidence>
<evidence type="ECO:0000269" key="5">
    <source>
    </source>
</evidence>
<evidence type="ECO:0000269" key="6">
    <source>
    </source>
</evidence>
<evidence type="ECO:0000269" key="7">
    <source>
    </source>
</evidence>
<evidence type="ECO:0000269" key="8">
    <source>
    </source>
</evidence>
<evidence type="ECO:0000305" key="9"/>
<evidence type="ECO:0000305" key="10">
    <source>
    </source>
</evidence>
<evidence type="ECO:0000305" key="11">
    <source>
    </source>
</evidence>
<evidence type="ECO:0000312" key="12">
    <source>
        <dbReference type="HGNC" id="HGNC:17597"/>
    </source>
</evidence>
<evidence type="ECO:0007744" key="13">
    <source>
    </source>
</evidence>
<evidence type="ECO:0007744" key="14">
    <source>
    </source>
</evidence>
<evidence type="ECO:0007744" key="15">
    <source>
    </source>
</evidence>
<feature type="initiator methionine" description="Removed" evidence="13 14">
    <location>
        <position position="1"/>
    </location>
</feature>
<feature type="chain" id="PRO_0000324617" description="Neurochondrin">
    <location>
        <begin position="2"/>
        <end position="729"/>
    </location>
</feature>
<feature type="modified residue" description="N-acetylserine" evidence="13 14">
    <location>
        <position position="2"/>
    </location>
</feature>
<feature type="modified residue" description="Phosphoserine" evidence="15">
    <location>
        <position position="2"/>
    </location>
</feature>
<feature type="modified residue" description="Asymmetric dimethylarginine" evidence="2">
    <location>
        <position position="75"/>
    </location>
</feature>
<feature type="modified residue" description="Phosphoserine" evidence="1">
    <location>
        <position position="448"/>
    </location>
</feature>
<feature type="lipid moiety-binding region" description="S-palmitoyl cysteine" evidence="1">
    <location>
        <position position="3"/>
    </location>
</feature>
<feature type="lipid moiety-binding region" description="S-palmitoyl cysteine" evidence="1">
    <location>
        <position position="4"/>
    </location>
</feature>
<feature type="splice variant" id="VSP_032315" description="In isoform 2." evidence="9">
    <location>
        <begin position="1"/>
        <end position="17"/>
    </location>
</feature>
<feature type="sequence variant" id="VAR_039849" description="In a colorectal cancer sample; somatic mutation; dbSNP:rs753974779." evidence="5">
    <original>V</original>
    <variation>E</variation>
    <location>
        <position position="392"/>
    </location>
</feature>
<feature type="sequence variant" id="VAR_039850" description="In a colorectal cancer sample; somatic mutation." evidence="5">
    <original>V</original>
    <variation>L</variation>
    <location>
        <position position="392"/>
    </location>
</feature>
<feature type="sequence variant" id="VAR_085876" description="In NEDIES; uncertain significance; in the neuroblastoma cell line SH-SY5Y, in which NCDN has been knocked out, does not rescue impaired neurite formation following retinoic acid treatment, contrary to wild-type; no effect on phosphorylation of ERK1/ERK2." evidence="7">
    <original>E</original>
    <variation>Q</variation>
    <location>
        <position position="433"/>
    </location>
</feature>
<feature type="sequence variant" id="VAR_085877" description="In NEDIES; in the neuroblastoma cell line SH-SY5Y, in which NCDN has been knocked out, does not rescue impaired neurite formation following retinoic acid treatment, contrary to wild-type; no effect on phosphorylation of ERK1/ERK2." evidence="7">
    <original>R</original>
    <variation>Q</variation>
    <location>
        <position position="478"/>
    </location>
</feature>
<feature type="sequence variant" id="VAR_085878" description="In NEDIES; in the neuroblastoma cell line SH-SY5Y, in which NCDN has been knocked out, does not rescue impaired neurite formation following retinoic acid treatment, contrary to wild-type; in these cells, there is markedly decreased phosphorylation of ERK1/ERK2, compared to wild-type, suggesting impaired GRM5 activation." evidence="7">
    <original>W</original>
    <variation>R</variation>
    <location>
        <position position="498"/>
    </location>
</feature>
<feature type="sequence variant" id="VAR_085879" description="In NEDIES; in the neuroblastoma cell line SH-SY5Y, in which NCDN has been knocked out, does not rescue impaired neurite formation following retinoic acid treatment, contrary to wild-type; in these cells, there is markedly decreased phosphorylation of ERK1/ERK2, compared to wild-type, suggesting impaired GRM5 activation." evidence="7">
    <original>P</original>
    <variation>L</variation>
    <location>
        <position position="652"/>
    </location>
</feature>
<feature type="initiator methionine" description="Removed" evidence="14">
    <location sequence="Q9UBB6-2">
        <position position="1"/>
    </location>
</feature>
<feature type="modified residue" description="N-acetylalanine" evidence="14">
    <location sequence="Q9UBB6-2">
        <position position="2"/>
    </location>
</feature>
<reference key="1">
    <citation type="journal article" date="1999" name="Biochim. Biophys. Acta">
        <title>Molecular cloning and expression of human neurochondrin-1 and -2.</title>
        <authorList>
            <person name="Mochizuki R."/>
            <person name="Ishizuka Y."/>
            <person name="Yanai K."/>
            <person name="Murakami K."/>
            <person name="Koga Y."/>
            <person name="Fukamizu A."/>
        </authorList>
    </citation>
    <scope>NUCLEOTIDE SEQUENCE [GENOMIC DNA / MRNA]</scope>
    <scope>TISSUE SPECIFICITY</scope>
    <source>
        <tissue>Brain</tissue>
    </source>
</reference>
<reference key="2">
    <citation type="journal article" date="2000" name="Biochim. Biophys. Acta">
        <authorList>
            <person name="Mochizuki R."/>
            <person name="Ishizuka Y."/>
            <person name="Yanai K."/>
            <person name="Murakami K."/>
            <person name="Koga Y."/>
            <person name="Fukamizu A."/>
        </authorList>
    </citation>
    <scope>ERRATUM OF PUBMED:10524216</scope>
</reference>
<reference key="3">
    <citation type="journal article" date="1998" name="DNA Res.">
        <title>Prediction of the coding sequences of unidentified human genes. IX. The complete sequences of 100 new cDNA clones from brain which can code for large proteins in vitro.</title>
        <authorList>
            <person name="Nagase T."/>
            <person name="Ishikawa K."/>
            <person name="Miyajima N."/>
            <person name="Tanaka A."/>
            <person name="Kotani H."/>
            <person name="Nomura N."/>
            <person name="Ohara O."/>
        </authorList>
    </citation>
    <scope>NUCLEOTIDE SEQUENCE [LARGE SCALE MRNA] (ISOFORM 2)</scope>
    <scope>TISSUE SPECIFICITY</scope>
    <source>
        <tissue>Brain</tissue>
    </source>
</reference>
<reference key="4">
    <citation type="journal article" date="2006" name="Nature">
        <title>The DNA sequence and biological annotation of human chromosome 1.</title>
        <authorList>
            <person name="Gregory S.G."/>
            <person name="Barlow K.F."/>
            <person name="McLay K.E."/>
            <person name="Kaul R."/>
            <person name="Swarbreck D."/>
            <person name="Dunham A."/>
            <person name="Scott C.E."/>
            <person name="Howe K.L."/>
            <person name="Woodfine K."/>
            <person name="Spencer C.C.A."/>
            <person name="Jones M.C."/>
            <person name="Gillson C."/>
            <person name="Searle S."/>
            <person name="Zhou Y."/>
            <person name="Kokocinski F."/>
            <person name="McDonald L."/>
            <person name="Evans R."/>
            <person name="Phillips K."/>
            <person name="Atkinson A."/>
            <person name="Cooper R."/>
            <person name="Jones C."/>
            <person name="Hall R.E."/>
            <person name="Andrews T.D."/>
            <person name="Lloyd C."/>
            <person name="Ainscough R."/>
            <person name="Almeida J.P."/>
            <person name="Ambrose K.D."/>
            <person name="Anderson F."/>
            <person name="Andrew R.W."/>
            <person name="Ashwell R.I.S."/>
            <person name="Aubin K."/>
            <person name="Babbage A.K."/>
            <person name="Bagguley C.L."/>
            <person name="Bailey J."/>
            <person name="Beasley H."/>
            <person name="Bethel G."/>
            <person name="Bird C.P."/>
            <person name="Bray-Allen S."/>
            <person name="Brown J.Y."/>
            <person name="Brown A.J."/>
            <person name="Buckley D."/>
            <person name="Burton J."/>
            <person name="Bye J."/>
            <person name="Carder C."/>
            <person name="Chapman J.C."/>
            <person name="Clark S.Y."/>
            <person name="Clarke G."/>
            <person name="Clee C."/>
            <person name="Cobley V."/>
            <person name="Collier R.E."/>
            <person name="Corby N."/>
            <person name="Coville G.J."/>
            <person name="Davies J."/>
            <person name="Deadman R."/>
            <person name="Dunn M."/>
            <person name="Earthrowl M."/>
            <person name="Ellington A.G."/>
            <person name="Errington H."/>
            <person name="Frankish A."/>
            <person name="Frankland J."/>
            <person name="French L."/>
            <person name="Garner P."/>
            <person name="Garnett J."/>
            <person name="Gay L."/>
            <person name="Ghori M.R.J."/>
            <person name="Gibson R."/>
            <person name="Gilby L.M."/>
            <person name="Gillett W."/>
            <person name="Glithero R.J."/>
            <person name="Grafham D.V."/>
            <person name="Griffiths C."/>
            <person name="Griffiths-Jones S."/>
            <person name="Grocock R."/>
            <person name="Hammond S."/>
            <person name="Harrison E.S.I."/>
            <person name="Hart E."/>
            <person name="Haugen E."/>
            <person name="Heath P.D."/>
            <person name="Holmes S."/>
            <person name="Holt K."/>
            <person name="Howden P.J."/>
            <person name="Hunt A.R."/>
            <person name="Hunt S.E."/>
            <person name="Hunter G."/>
            <person name="Isherwood J."/>
            <person name="James R."/>
            <person name="Johnson C."/>
            <person name="Johnson D."/>
            <person name="Joy A."/>
            <person name="Kay M."/>
            <person name="Kershaw J.K."/>
            <person name="Kibukawa M."/>
            <person name="Kimberley A.M."/>
            <person name="King A."/>
            <person name="Knights A.J."/>
            <person name="Lad H."/>
            <person name="Laird G."/>
            <person name="Lawlor S."/>
            <person name="Leongamornlert D.A."/>
            <person name="Lloyd D.M."/>
            <person name="Loveland J."/>
            <person name="Lovell J."/>
            <person name="Lush M.J."/>
            <person name="Lyne R."/>
            <person name="Martin S."/>
            <person name="Mashreghi-Mohammadi M."/>
            <person name="Matthews L."/>
            <person name="Matthews N.S.W."/>
            <person name="McLaren S."/>
            <person name="Milne S."/>
            <person name="Mistry S."/>
            <person name="Moore M.J.F."/>
            <person name="Nickerson T."/>
            <person name="O'Dell C.N."/>
            <person name="Oliver K."/>
            <person name="Palmeiri A."/>
            <person name="Palmer S.A."/>
            <person name="Parker A."/>
            <person name="Patel D."/>
            <person name="Pearce A.V."/>
            <person name="Peck A.I."/>
            <person name="Pelan S."/>
            <person name="Phelps K."/>
            <person name="Phillimore B.J."/>
            <person name="Plumb R."/>
            <person name="Rajan J."/>
            <person name="Raymond C."/>
            <person name="Rouse G."/>
            <person name="Saenphimmachak C."/>
            <person name="Sehra H.K."/>
            <person name="Sheridan E."/>
            <person name="Shownkeen R."/>
            <person name="Sims S."/>
            <person name="Skuce C.D."/>
            <person name="Smith M."/>
            <person name="Steward C."/>
            <person name="Subramanian S."/>
            <person name="Sycamore N."/>
            <person name="Tracey A."/>
            <person name="Tromans A."/>
            <person name="Van Helmond Z."/>
            <person name="Wall M."/>
            <person name="Wallis J.M."/>
            <person name="White S."/>
            <person name="Whitehead S.L."/>
            <person name="Wilkinson J.E."/>
            <person name="Willey D.L."/>
            <person name="Williams H."/>
            <person name="Wilming L."/>
            <person name="Wray P.W."/>
            <person name="Wu Z."/>
            <person name="Coulson A."/>
            <person name="Vaudin M."/>
            <person name="Sulston J.E."/>
            <person name="Durbin R.M."/>
            <person name="Hubbard T."/>
            <person name="Wooster R."/>
            <person name="Dunham I."/>
            <person name="Carter N.P."/>
            <person name="McVean G."/>
            <person name="Ross M.T."/>
            <person name="Harrow J."/>
            <person name="Olson M.V."/>
            <person name="Beck S."/>
            <person name="Rogers J."/>
            <person name="Bentley D.R."/>
        </authorList>
    </citation>
    <scope>NUCLEOTIDE SEQUENCE [LARGE SCALE GENOMIC DNA]</scope>
</reference>
<reference key="5">
    <citation type="submission" date="2005-09" db="EMBL/GenBank/DDBJ databases">
        <authorList>
            <person name="Mural R.J."/>
            <person name="Istrail S."/>
            <person name="Sutton G.G."/>
            <person name="Florea L."/>
            <person name="Halpern A.L."/>
            <person name="Mobarry C.M."/>
            <person name="Lippert R."/>
            <person name="Walenz B."/>
            <person name="Shatkay H."/>
            <person name="Dew I."/>
            <person name="Miller J.R."/>
            <person name="Flanigan M.J."/>
            <person name="Edwards N.J."/>
            <person name="Bolanos R."/>
            <person name="Fasulo D."/>
            <person name="Halldorsson B.V."/>
            <person name="Hannenhalli S."/>
            <person name="Turner R."/>
            <person name="Yooseph S."/>
            <person name="Lu F."/>
            <person name="Nusskern D.R."/>
            <person name="Shue B.C."/>
            <person name="Zheng X.H."/>
            <person name="Zhong F."/>
            <person name="Delcher A.L."/>
            <person name="Huson D.H."/>
            <person name="Kravitz S.A."/>
            <person name="Mouchard L."/>
            <person name="Reinert K."/>
            <person name="Remington K.A."/>
            <person name="Clark A.G."/>
            <person name="Waterman M.S."/>
            <person name="Eichler E.E."/>
            <person name="Adams M.D."/>
            <person name="Hunkapiller M.W."/>
            <person name="Myers E.W."/>
            <person name="Venter J.C."/>
        </authorList>
    </citation>
    <scope>NUCLEOTIDE SEQUENCE [LARGE SCALE GENOMIC DNA]</scope>
</reference>
<reference key="6">
    <citation type="journal article" date="2004" name="Genome Res.">
        <title>The status, quality, and expansion of the NIH full-length cDNA project: the Mammalian Gene Collection (MGC).</title>
        <authorList>
            <consortium name="The MGC Project Team"/>
        </authorList>
    </citation>
    <scope>NUCLEOTIDE SEQUENCE [LARGE SCALE MRNA]</scope>
    <source>
        <tissue>Uterus</tissue>
    </source>
</reference>
<reference key="7">
    <citation type="journal article" date="2006" name="J. Biol. Chem.">
        <title>Interaction of neurochondrin with the melanin-concentrating hormone receptor 1 interferes with G protein-coupled signal transduction but not agonist-mediated internalization.</title>
        <authorList>
            <person name="Francke F."/>
            <person name="Ward R.J."/>
            <person name="Jenkins L."/>
            <person name="Kellett E."/>
            <person name="Richter D."/>
            <person name="Milligan G."/>
            <person name="Baechner D."/>
        </authorList>
    </citation>
    <scope>FUNCTION</scope>
    <scope>INTERACTION WITH MCHR1</scope>
</reference>
<reference key="8">
    <citation type="journal article" date="2009" name="Anal. Chem.">
        <title>Lys-N and trypsin cover complementary parts of the phosphoproteome in a refined SCX-based approach.</title>
        <authorList>
            <person name="Gauci S."/>
            <person name="Helbig A.O."/>
            <person name="Slijper M."/>
            <person name="Krijgsveld J."/>
            <person name="Heck A.J."/>
            <person name="Mohammed S."/>
        </authorList>
    </citation>
    <scope>ACETYLATION [LARGE SCALE ANALYSIS] AT SER-2</scope>
    <scope>CLEAVAGE OF INITIATOR METHIONINE [LARGE SCALE ANALYSIS]</scope>
    <scope>IDENTIFICATION BY MASS SPECTROMETRY [LARGE SCALE ANALYSIS]</scope>
</reference>
<reference key="9">
    <citation type="journal article" date="2011" name="BMC Syst. Biol.">
        <title>Initial characterization of the human central proteome.</title>
        <authorList>
            <person name="Burkard T.R."/>
            <person name="Planyavsky M."/>
            <person name="Kaupe I."/>
            <person name="Breitwieser F.P."/>
            <person name="Buerckstuemmer T."/>
            <person name="Bennett K.L."/>
            <person name="Superti-Furga G."/>
            <person name="Colinge J."/>
        </authorList>
    </citation>
    <scope>IDENTIFICATION BY MASS SPECTROMETRY [LARGE SCALE ANALYSIS]</scope>
</reference>
<reference key="10">
    <citation type="journal article" date="2012" name="Proc. Natl. Acad. Sci. U.S.A.">
        <title>N-terminal acetylome analyses and functional insights of the N-terminal acetyltransferase NatB.</title>
        <authorList>
            <person name="Van Damme P."/>
            <person name="Lasa M."/>
            <person name="Polevoda B."/>
            <person name="Gazquez C."/>
            <person name="Elosegui-Artola A."/>
            <person name="Kim D.S."/>
            <person name="De Juan-Pardo E."/>
            <person name="Demeyer K."/>
            <person name="Hole K."/>
            <person name="Larrea E."/>
            <person name="Timmerman E."/>
            <person name="Prieto J."/>
            <person name="Arnesen T."/>
            <person name="Sherman F."/>
            <person name="Gevaert K."/>
            <person name="Aldabe R."/>
        </authorList>
    </citation>
    <scope>ACETYLATION [LARGE SCALE ANALYSIS] AT SER-2</scope>
    <scope>ACETYLATION [LARGE SCALE ANALYSIS] AT ALA-2 (ISOFORM 2)</scope>
    <scope>CLEAVAGE OF INITIATOR METHIONINE [LARGE SCALE ANALYSIS]</scope>
    <scope>CLEAVAGE OF INITIATOR METHIONINE [LARGE SCALE ANALYSIS] (ISOFORM 2)</scope>
    <scope>IDENTIFICATION BY MASS SPECTROMETRY [LARGE SCALE ANALYSIS]</scope>
</reference>
<reference key="11">
    <citation type="journal article" date="2013" name="J. Biol. Chem.">
        <title>In silico screening for palmitoyl substrates reveals a role for DHHC1/3/10 (zDHHC1/3/11)-mediated neurochondrin palmitoylation in its targeting to Rab5-positive endosomes.</title>
        <authorList>
            <person name="Oku S."/>
            <person name="Takahashi N."/>
            <person name="Fukata Y."/>
            <person name="Fukata M."/>
        </authorList>
    </citation>
    <scope>SUBCELLULAR LOCATION</scope>
    <scope>TOPOLOGY</scope>
</reference>
<reference key="12">
    <citation type="journal article" date="2013" name="J. Proteome Res.">
        <title>Toward a comprehensive characterization of a human cancer cell phosphoproteome.</title>
        <authorList>
            <person name="Zhou H."/>
            <person name="Di Palma S."/>
            <person name="Preisinger C."/>
            <person name="Peng M."/>
            <person name="Polat A.N."/>
            <person name="Heck A.J."/>
            <person name="Mohammed S."/>
        </authorList>
    </citation>
    <scope>PHOSPHORYLATION [LARGE SCALE ANALYSIS] AT SER-2</scope>
    <scope>IDENTIFICATION BY MASS SPECTROMETRY [LARGE SCALE ANALYSIS]</scope>
    <source>
        <tissue>Erythroleukemia</tissue>
    </source>
</reference>
<reference key="13">
    <citation type="journal article" date="2006" name="Science">
        <title>The consensus coding sequences of human breast and colorectal cancers.</title>
        <authorList>
            <person name="Sjoeblom T."/>
            <person name="Jones S."/>
            <person name="Wood L.D."/>
            <person name="Parsons D.W."/>
            <person name="Lin J."/>
            <person name="Barber T.D."/>
            <person name="Mandelker D."/>
            <person name="Leary R.J."/>
            <person name="Ptak J."/>
            <person name="Silliman N."/>
            <person name="Szabo S."/>
            <person name="Buckhaults P."/>
            <person name="Farrell C."/>
            <person name="Meeh P."/>
            <person name="Markowitz S.D."/>
            <person name="Willis J."/>
            <person name="Dawson D."/>
            <person name="Willson J.K.V."/>
            <person name="Gazdar A.F."/>
            <person name="Hartigan J."/>
            <person name="Wu L."/>
            <person name="Liu C."/>
            <person name="Parmigiani G."/>
            <person name="Park B.H."/>
            <person name="Bachman K.E."/>
            <person name="Papadopoulos N."/>
            <person name="Vogelstein B."/>
            <person name="Kinzler K.W."/>
            <person name="Velculescu V.E."/>
        </authorList>
    </citation>
    <scope>VARIANTS [LARGE SCALE ANALYSIS] GLU-392 AND LEU-392</scope>
</reference>
<reference key="14">
    <citation type="journal article" date="2021" name="Am. J. Hum. Genet.">
        <title>Monoallelic and bi-allelic variants in NCDN cause neurodevelopmental delay, intellectual disability, and epilepsy.</title>
        <authorList>
            <person name="Fatima A."/>
            <person name="Hoeber J."/>
            <person name="Schuster J."/>
            <person name="Koshimizu E."/>
            <person name="Maya-Gonzalez C."/>
            <person name="Keren B."/>
            <person name="Mignot C."/>
            <person name="Akram T."/>
            <person name="Ali Z."/>
            <person name="Miyatake S."/>
            <person name="Tanigawa J."/>
            <person name="Koike T."/>
            <person name="Kato M."/>
            <person name="Murakami Y."/>
            <person name="Abdullah U."/>
            <person name="Ali M.A."/>
            <person name="Fadoul R."/>
            <person name="Laan L."/>
            <person name="Castillejo-Lopez C."/>
            <person name="Liik M."/>
            <person name="Jin Z."/>
            <person name="Birnir B."/>
            <person name="Matsumoto N."/>
            <person name="Baig S.M."/>
            <person name="Klar J."/>
            <person name="Dahl N."/>
        </authorList>
    </citation>
    <scope>INVOLVEMENT IN NEDIES</scope>
    <scope>FUNCTION</scope>
    <scope>VARIANTS NEDIES GLN-433; GLN-478; ARG-498 AND LEU-652</scope>
    <scope>CHARACTERIZATION OF VARIANTS NEDIES GLN-433; GLU-478; ARG-498 AND LEU-652</scope>
</reference>
<organism>
    <name type="scientific">Homo sapiens</name>
    <name type="common">Human</name>
    <dbReference type="NCBI Taxonomy" id="9606"/>
    <lineage>
        <taxon>Eukaryota</taxon>
        <taxon>Metazoa</taxon>
        <taxon>Chordata</taxon>
        <taxon>Craniata</taxon>
        <taxon>Vertebrata</taxon>
        <taxon>Euteleostomi</taxon>
        <taxon>Mammalia</taxon>
        <taxon>Eutheria</taxon>
        <taxon>Euarchontoglires</taxon>
        <taxon>Primates</taxon>
        <taxon>Haplorrhini</taxon>
        <taxon>Catarrhini</taxon>
        <taxon>Hominidae</taxon>
        <taxon>Homo</taxon>
    </lineage>
</organism>
<protein>
    <recommendedName>
        <fullName evidence="9">Neurochondrin</fullName>
    </recommendedName>
</protein>
<comment type="function">
    <text evidence="4 7 11">Probably involved in signal transduction in the nervous system, via increasing cell surface localization of GRM5/mGluR5 and positively regulating its signaling (PubMed:33711248). Required for the spatial learning process. Acts as a negative regulator of Ca(2+)-calmodulin-dependent protein kinase 2 (CaMK2) phosphorylation. May play a role in modulating melanin-concentrating hormone-mediated functions via its interaction with MCHR1 that interferes with G protein-coupled signal transduction. May be involved in bone metabolism. May also be involved in neurite outgrowth (Probable).</text>
</comment>
<comment type="subunit">
    <text evidence="1 2 4">Interacts with MCHR1 (PubMed:16945926). Interacts with SEMA4C (By similarity). Interacts with DIAPH1 (via FH3 domain) (By similarity). Interacts with GRM5 (By similarity).</text>
</comment>
<comment type="interaction">
    <interactant intactId="EBI-1053490">
        <id>Q9UBB6</id>
    </interactant>
    <interactant intactId="EBI-2349927">
        <id>Q5JST6</id>
        <label>EFHC2</label>
    </interactant>
    <organismsDiffer>false</organismsDiffer>
    <experiments>6</experiments>
</comment>
<comment type="interaction">
    <interactant intactId="EBI-1053490">
        <id>Q9UBB6</id>
    </interactant>
    <interactant intactId="EBI-2949715">
        <id>O95678</id>
        <label>KRT75</label>
    </interactant>
    <organismsDiffer>false</organismsDiffer>
    <experiments>3</experiments>
</comment>
<comment type="interaction">
    <interactant intactId="EBI-1053490">
        <id>Q9UBB6</id>
    </interactant>
    <interactant intactId="EBI-747278">
        <id>P26367</id>
        <label>PAX6</label>
    </interactant>
    <organismsDiffer>false</organismsDiffer>
    <experiments>3</experiments>
</comment>
<comment type="interaction">
    <interactant intactId="EBI-1053490">
        <id>Q9UBB6</id>
    </interactant>
    <interactant intactId="EBI-717399">
        <id>Q9BSI4</id>
        <label>TINF2</label>
    </interactant>
    <organismsDiffer>false</organismsDiffer>
    <experiments>2</experiments>
</comment>
<comment type="interaction">
    <interactant intactId="EBI-1053490">
        <id>Q9UBB6</id>
    </interactant>
    <interactant intactId="EBI-717810">
        <id>Q08117</id>
        <label>TLE5</label>
    </interactant>
    <organismsDiffer>false</organismsDiffer>
    <experiments>3</experiments>
</comment>
<comment type="interaction">
    <interactant intactId="EBI-1053490">
        <id>Q9UBB6</id>
    </interactant>
    <interactant intactId="EBI-740037">
        <id>O96006</id>
        <label>ZBED1</label>
    </interactant>
    <organismsDiffer>false</organismsDiffer>
    <experiments>3</experiments>
</comment>
<comment type="interaction">
    <interactant intactId="EBI-1053490">
        <id>Q9UBB6</id>
    </interactant>
    <interactant intactId="EBI-8643207">
        <id>Q8TD17</id>
        <label>ZNF398</label>
    </interactant>
    <organismsDiffer>false</organismsDiffer>
    <experiments>3</experiments>
</comment>
<comment type="subcellular location">
    <subcellularLocation>
        <location evidence="6">Cytoplasm</location>
        <location evidence="6">Cytosol</location>
    </subcellularLocation>
    <subcellularLocation>
        <location evidence="1">Endosome membrane</location>
        <topology evidence="10">Lipid-anchor</topology>
    </subcellularLocation>
    <subcellularLocation>
        <location evidence="1">Cell projection</location>
        <location evidence="1">Dendrite</location>
    </subcellularLocation>
    <subcellularLocation>
        <location evidence="1">Postsynapse</location>
    </subcellularLocation>
    <text evidence="1">Localizes to somatic regions of neurons. Localization to endosome membrane requires palmitoylation.</text>
</comment>
<comment type="alternative products">
    <event type="alternative splicing"/>
    <isoform>
        <id>Q9UBB6-1</id>
        <name>1</name>
        <name>NCDN1</name>
        <name>Neurochondrin-1</name>
        <sequence type="displayed"/>
    </isoform>
    <isoform>
        <id>Q9UBB6-2</id>
        <name>2</name>
        <name>NCDN2</name>
        <name>Neurochondrin-2</name>
        <sequence type="described" ref="VSP_032315"/>
    </isoform>
</comment>
<comment type="tissue specificity">
    <text evidence="3 8">Abundantly expressed in whole adult brain and in all individual brain regions examined, including spinal cord. Weakly expressed in ovary, testis, fetal brain and small intestine.</text>
</comment>
<comment type="PTM">
    <text evidence="1">Palmitoylated. Palmitoylation by ZDHHC1, ZDHHC3 and ZDHHC11 regulates the association of NCDN with endosome membranes. May also be palmitoylated by ZDHHC7.</text>
</comment>
<comment type="disease" evidence="7">
    <disease id="DI-06137">
        <name>Neurodevelopmental disorder with infantile epileptic spasms</name>
        <acronym>NEDIES</acronym>
        <description>An autosomal dominant neurodevelopmental disorder characterized by onset of severe and frequent epileptic spasms within the first year of life. Affected individuals have global developmental delay with delayed walking and poor or absent speech. More variable features may include poor overall growth, high-arched palate, and delayed myelination on brain imaging.</description>
        <dbReference type="MIM" id="619373"/>
    </disease>
    <text>The disease is caused by variants affecting the gene represented in this entry.</text>
</comment>
<comment type="similarity">
    <text evidence="9">Belongs to the neurochondrin family.</text>
</comment>
<comment type="sequence caution" evidence="9">
    <conflict type="erroneous gene model prediction">
        <sequence resource="EMBL-CDS" id="AAD05029"/>
    </conflict>
</comment>
<comment type="sequence caution" evidence="9">
    <conflict type="erroneous initiation">
        <sequence resource="EMBL-CDS" id="BAA25533"/>
    </conflict>
    <text>Extended N-terminus.</text>
</comment>
<keyword id="KW-0007">Acetylation</keyword>
<keyword id="KW-0025">Alternative splicing</keyword>
<keyword id="KW-0966">Cell projection</keyword>
<keyword id="KW-0963">Cytoplasm</keyword>
<keyword id="KW-0225">Disease variant</keyword>
<keyword id="KW-0967">Endosome</keyword>
<keyword id="KW-0887">Epilepsy</keyword>
<keyword id="KW-0991">Intellectual disability</keyword>
<keyword id="KW-0449">Lipoprotein</keyword>
<keyword id="KW-0472">Membrane</keyword>
<keyword id="KW-0488">Methylation</keyword>
<keyword id="KW-0564">Palmitate</keyword>
<keyword id="KW-0597">Phosphoprotein</keyword>
<keyword id="KW-1267">Proteomics identification</keyword>
<keyword id="KW-1185">Reference proteome</keyword>
<keyword id="KW-0770">Synapse</keyword>
<sequence>MSCCDLAAAGQLGKASIMASDCEPALNQAEGRNPTLERYLGALREAKNDSEQFAALLLVTKAVKAGDIDAKTRRRIFDAVGFTFPNRLLTTKEAPDGCPDHVLRALGVALLACFCSDPELAAHPQVLNKIPILSTFLTARGDPDDAARRSMIDDTYQCLTAVAGTPRGPRHLIAGGTVSALCQAYLGHGYGFDQALALLVGLLAAAETQCWKEAEPDLLAVLRGLSEDFQKAEDASKFELCQLLPLFLPPTTVPPECYRDLQAGLARILGSKLSSWQRNPALKLAARLAHACGSDWIPAGSSGSKFLALLVNLACVEVRLALEETGTEVKEDVVTACYALMELGIQECTRCEQSLLKEPQKVQLVSVMKEAIGAVIHYLLQVGSEKQKEPFVFASVRILGAWLAEETSSLRKEVCQLLPFLVRYAKTLYEEAEEANDLSQQVANLAISPTTPGPTWPGDALRLLLPGWCHLTVEDGPREILIKEGAPSLLCKYFLQQWELTSPGHDTSVLPDSVEIGLQTCCHIFLNLVVTAPGLIKRDACFTSLMNTLMTSLPALVQQQGRLLLAANVATLGLLMARLLSTSPALQGTPASRGFFAAAILFLSQSHVARATPGSDQAVLALSPEYEGIWADLQELWFLGMQAFTGCVPLLPWLAPAALRSRWPQELLQLLGSVSPNSVKPEMVAAYQGVLVELARANRLCREAMRLQAGEETASHYRMAALEQCLSEP</sequence>
<proteinExistence type="evidence at protein level"/>
<name>NCDN_HUMAN</name>
<gene>
    <name evidence="12" type="primary">NCDN</name>
    <name type="synonym">KIAA0607</name>
</gene>